<gene>
    <name type="ordered locus">At1g76954</name>
    <name type="ORF">F22K20</name>
</gene>
<dbReference type="EMBL" id="AC002291">
    <property type="status" value="NOT_ANNOTATED_CDS"/>
    <property type="molecule type" value="Genomic_DNA"/>
</dbReference>
<dbReference type="EMBL" id="CP002684">
    <property type="protein sequence ID" value="AEE35910.1"/>
    <property type="molecule type" value="Genomic_DNA"/>
</dbReference>
<dbReference type="RefSeq" id="NP_001031288.1">
    <property type="nucleotide sequence ID" value="NM_001036211.1"/>
</dbReference>
<dbReference type="SMR" id="Q2V4C4"/>
<dbReference type="PaxDb" id="3702-AT1G76954.1"/>
<dbReference type="EnsemblPlants" id="AT1G76954.1">
    <property type="protein sequence ID" value="AT1G76954.1"/>
    <property type="gene ID" value="AT1G76954"/>
</dbReference>
<dbReference type="GeneID" id="3767712"/>
<dbReference type="Gramene" id="AT1G76954.1">
    <property type="protein sequence ID" value="AT1G76954.1"/>
    <property type="gene ID" value="AT1G76954"/>
</dbReference>
<dbReference type="KEGG" id="ath:AT1G76954"/>
<dbReference type="Araport" id="AT1G76954"/>
<dbReference type="TAIR" id="AT1G76954"/>
<dbReference type="HOGENOM" id="CLU_2761249_0_0_1"/>
<dbReference type="InParanoid" id="Q2V4C4"/>
<dbReference type="OMA" id="PRIRMCY"/>
<dbReference type="OrthoDB" id="1025441at2759"/>
<dbReference type="PhylomeDB" id="Q2V4C4"/>
<dbReference type="PRO" id="PR:Q2V4C4"/>
<dbReference type="Proteomes" id="UP000006548">
    <property type="component" value="Chromosome 1"/>
</dbReference>
<dbReference type="ExpressionAtlas" id="Q2V4C4">
    <property type="expression patterns" value="baseline and differential"/>
</dbReference>
<dbReference type="GO" id="GO:0005576">
    <property type="term" value="C:extracellular region"/>
    <property type="evidence" value="ECO:0007669"/>
    <property type="project" value="UniProtKB-SubCell"/>
</dbReference>
<dbReference type="GO" id="GO:0050832">
    <property type="term" value="P:defense response to fungus"/>
    <property type="evidence" value="ECO:0007669"/>
    <property type="project" value="UniProtKB-KW"/>
</dbReference>
<dbReference type="GO" id="GO:0031640">
    <property type="term" value="P:killing of cells of another organism"/>
    <property type="evidence" value="ECO:0007669"/>
    <property type="project" value="UniProtKB-KW"/>
</dbReference>
<dbReference type="InterPro" id="IPR036574">
    <property type="entry name" value="Scorpion_toxin-like_sf"/>
</dbReference>
<dbReference type="SUPFAM" id="SSF57095">
    <property type="entry name" value="Scorpion toxin-like"/>
    <property type="match status" value="1"/>
</dbReference>
<feature type="signal peptide" evidence="2">
    <location>
        <begin position="1"/>
        <end position="23"/>
    </location>
</feature>
<feature type="chain" id="PRO_0000379741" description="Putative defensin-like protein 280">
    <location>
        <begin position="24"/>
        <end position="70"/>
    </location>
</feature>
<feature type="disulfide bond" evidence="1">
    <location>
        <begin position="30"/>
        <end position="53"/>
    </location>
</feature>
<feature type="disulfide bond" evidence="1">
    <location>
        <begin position="39"/>
        <end position="65"/>
    </location>
</feature>
<feature type="disulfide bond" evidence="1">
    <location>
        <begin position="43"/>
        <end position="67"/>
    </location>
</feature>
<keyword id="KW-0929">Antimicrobial</keyword>
<keyword id="KW-1015">Disulfide bond</keyword>
<keyword id="KW-0295">Fungicide</keyword>
<keyword id="KW-0611">Plant defense</keyword>
<keyword id="KW-1185">Reference proteome</keyword>
<keyword id="KW-0964">Secreted</keyword>
<keyword id="KW-0732">Signal</keyword>
<reference key="1">
    <citation type="journal article" date="2000" name="Nature">
        <title>Sequence and analysis of chromosome 1 of the plant Arabidopsis thaliana.</title>
        <authorList>
            <person name="Theologis A."/>
            <person name="Ecker J.R."/>
            <person name="Palm C.J."/>
            <person name="Federspiel N.A."/>
            <person name="Kaul S."/>
            <person name="White O."/>
            <person name="Alonso J."/>
            <person name="Altafi H."/>
            <person name="Araujo R."/>
            <person name="Bowman C.L."/>
            <person name="Brooks S.Y."/>
            <person name="Buehler E."/>
            <person name="Chan A."/>
            <person name="Chao Q."/>
            <person name="Chen H."/>
            <person name="Cheuk R.F."/>
            <person name="Chin C.W."/>
            <person name="Chung M.K."/>
            <person name="Conn L."/>
            <person name="Conway A.B."/>
            <person name="Conway A.R."/>
            <person name="Creasy T.H."/>
            <person name="Dewar K."/>
            <person name="Dunn P."/>
            <person name="Etgu P."/>
            <person name="Feldblyum T.V."/>
            <person name="Feng J.-D."/>
            <person name="Fong B."/>
            <person name="Fujii C.Y."/>
            <person name="Gill J.E."/>
            <person name="Goldsmith A.D."/>
            <person name="Haas B."/>
            <person name="Hansen N.F."/>
            <person name="Hughes B."/>
            <person name="Huizar L."/>
            <person name="Hunter J.L."/>
            <person name="Jenkins J."/>
            <person name="Johnson-Hopson C."/>
            <person name="Khan S."/>
            <person name="Khaykin E."/>
            <person name="Kim C.J."/>
            <person name="Koo H.L."/>
            <person name="Kremenetskaia I."/>
            <person name="Kurtz D.B."/>
            <person name="Kwan A."/>
            <person name="Lam B."/>
            <person name="Langin-Hooper S."/>
            <person name="Lee A."/>
            <person name="Lee J.M."/>
            <person name="Lenz C.A."/>
            <person name="Li J.H."/>
            <person name="Li Y.-P."/>
            <person name="Lin X."/>
            <person name="Liu S.X."/>
            <person name="Liu Z.A."/>
            <person name="Luros J.S."/>
            <person name="Maiti R."/>
            <person name="Marziali A."/>
            <person name="Militscher J."/>
            <person name="Miranda M."/>
            <person name="Nguyen M."/>
            <person name="Nierman W.C."/>
            <person name="Osborne B.I."/>
            <person name="Pai G."/>
            <person name="Peterson J."/>
            <person name="Pham P.K."/>
            <person name="Rizzo M."/>
            <person name="Rooney T."/>
            <person name="Rowley D."/>
            <person name="Sakano H."/>
            <person name="Salzberg S.L."/>
            <person name="Schwartz J.R."/>
            <person name="Shinn P."/>
            <person name="Southwick A.M."/>
            <person name="Sun H."/>
            <person name="Tallon L.J."/>
            <person name="Tambunga G."/>
            <person name="Toriumi M.J."/>
            <person name="Town C.D."/>
            <person name="Utterback T."/>
            <person name="Van Aken S."/>
            <person name="Vaysberg M."/>
            <person name="Vysotskaia V.S."/>
            <person name="Walker M."/>
            <person name="Wu D."/>
            <person name="Yu G."/>
            <person name="Fraser C.M."/>
            <person name="Venter J.C."/>
            <person name="Davis R.W."/>
        </authorList>
    </citation>
    <scope>NUCLEOTIDE SEQUENCE [LARGE SCALE GENOMIC DNA]</scope>
    <source>
        <strain>cv. Columbia</strain>
    </source>
</reference>
<reference key="2">
    <citation type="journal article" date="2017" name="Plant J.">
        <title>Araport11: a complete reannotation of the Arabidopsis thaliana reference genome.</title>
        <authorList>
            <person name="Cheng C.Y."/>
            <person name="Krishnakumar V."/>
            <person name="Chan A.P."/>
            <person name="Thibaud-Nissen F."/>
            <person name="Schobel S."/>
            <person name="Town C.D."/>
        </authorList>
    </citation>
    <scope>GENOME REANNOTATION</scope>
    <source>
        <strain>cv. Columbia</strain>
    </source>
</reference>
<reference key="3">
    <citation type="journal article" date="2005" name="Plant Physiol.">
        <title>Genome organization of more than 300 defensin-like genes in Arabidopsis.</title>
        <authorList>
            <person name="Silverstein K.A.T."/>
            <person name="Graham M.A."/>
            <person name="Paape T.D."/>
            <person name="VandenBosch K.A."/>
        </authorList>
    </citation>
    <scope>GENE FAMILY</scope>
</reference>
<organism>
    <name type="scientific">Arabidopsis thaliana</name>
    <name type="common">Mouse-ear cress</name>
    <dbReference type="NCBI Taxonomy" id="3702"/>
    <lineage>
        <taxon>Eukaryota</taxon>
        <taxon>Viridiplantae</taxon>
        <taxon>Streptophyta</taxon>
        <taxon>Embryophyta</taxon>
        <taxon>Tracheophyta</taxon>
        <taxon>Spermatophyta</taxon>
        <taxon>Magnoliopsida</taxon>
        <taxon>eudicotyledons</taxon>
        <taxon>Gunneridae</taxon>
        <taxon>Pentapetalae</taxon>
        <taxon>rosids</taxon>
        <taxon>malvids</taxon>
        <taxon>Brassicales</taxon>
        <taxon>Brassicaceae</taxon>
        <taxon>Camelineae</taxon>
        <taxon>Arabidopsis</taxon>
    </lineage>
</organism>
<name>DF280_ARATH</name>
<evidence type="ECO:0000250" key="1"/>
<evidence type="ECO:0000255" key="2"/>
<evidence type="ECO:0000305" key="3"/>
<accession>Q2V4C4</accession>
<proteinExistence type="inferred from homology"/>
<comment type="subcellular location">
    <subcellularLocation>
        <location evidence="1">Secreted</location>
    </subcellularLocation>
</comment>
<comment type="similarity">
    <text evidence="3">Belongs to the DEFL family.</text>
</comment>
<comment type="caution">
    <text evidence="3">Lacks 1 of the 4 disulfide bonds, which are conserved features of the family.</text>
</comment>
<protein>
    <recommendedName>
        <fullName>Putative defensin-like protein 280</fullName>
    </recommendedName>
</protein>
<sequence length="70" mass="8145">MASIKHFFLVFICVSVLLTSGLADYKFHVCDPSFDEKDCDFECKEFGHPGGYCRPDRVQPRIRMCYCTDR</sequence>